<gene>
    <name type="primary">bipD</name>
    <name type="ordered locus">BMA10229_2074</name>
</gene>
<accession>A2S1Q3</accession>
<name>BIPD_BURM9</name>
<organism>
    <name type="scientific">Burkholderia mallei (strain NCTC 10229)</name>
    <dbReference type="NCBI Taxonomy" id="412022"/>
    <lineage>
        <taxon>Bacteria</taxon>
        <taxon>Pseudomonadati</taxon>
        <taxon>Pseudomonadota</taxon>
        <taxon>Betaproteobacteria</taxon>
        <taxon>Burkholderiales</taxon>
        <taxon>Burkholderiaceae</taxon>
        <taxon>Burkholderia</taxon>
        <taxon>pseudomallei group</taxon>
    </lineage>
</organism>
<proteinExistence type="inferred from homology"/>
<reference key="1">
    <citation type="journal article" date="2010" name="Genome Biol. Evol.">
        <title>Continuing evolution of Burkholderia mallei through genome reduction and large-scale rearrangements.</title>
        <authorList>
            <person name="Losada L."/>
            <person name="Ronning C.M."/>
            <person name="DeShazer D."/>
            <person name="Woods D."/>
            <person name="Fedorova N."/>
            <person name="Kim H.S."/>
            <person name="Shabalina S.A."/>
            <person name="Pearson T.R."/>
            <person name="Brinkac L."/>
            <person name="Tan P."/>
            <person name="Nandi T."/>
            <person name="Crabtree J."/>
            <person name="Badger J."/>
            <person name="Beckstrom-Sternberg S."/>
            <person name="Saqib M."/>
            <person name="Schutzer S.E."/>
            <person name="Keim P."/>
            <person name="Nierman W.C."/>
        </authorList>
    </citation>
    <scope>NUCLEOTIDE SEQUENCE [LARGE SCALE GENOMIC DNA]</scope>
    <source>
        <strain>NCTC 10229</strain>
    </source>
</reference>
<dbReference type="EMBL" id="CP000545">
    <property type="protein sequence ID" value="ABN00020.2"/>
    <property type="molecule type" value="Genomic_DNA"/>
</dbReference>
<dbReference type="RefSeq" id="WP_004188590.1">
    <property type="nucleotide sequence ID" value="NC_008835.1"/>
</dbReference>
<dbReference type="SMR" id="A2S1Q3"/>
<dbReference type="GeneID" id="93063709"/>
<dbReference type="KEGG" id="bml:BMA10229_2074"/>
<dbReference type="HOGENOM" id="CLU_893331_0_0_4"/>
<dbReference type="Proteomes" id="UP000002283">
    <property type="component" value="Chromosome II"/>
</dbReference>
<dbReference type="GO" id="GO:0005576">
    <property type="term" value="C:extracellular region"/>
    <property type="evidence" value="ECO:0007669"/>
    <property type="project" value="UniProtKB-SubCell"/>
</dbReference>
<dbReference type="Gene3D" id="1.20.1710.10">
    <property type="entry name" value="IpaD-like"/>
    <property type="match status" value="1"/>
</dbReference>
<dbReference type="InterPro" id="IPR036708">
    <property type="entry name" value="BipD-like_sf"/>
</dbReference>
<dbReference type="InterPro" id="IPR009483">
    <property type="entry name" value="IpaD/BipD/SipD"/>
</dbReference>
<dbReference type="NCBIfam" id="TIGR02553">
    <property type="entry name" value="SipD_IpaD_SspD"/>
    <property type="match status" value="1"/>
</dbReference>
<dbReference type="Pfam" id="PF06511">
    <property type="entry name" value="T3SS_TC"/>
    <property type="match status" value="1"/>
</dbReference>
<dbReference type="SUPFAM" id="SSF140693">
    <property type="entry name" value="IpaD-like"/>
    <property type="match status" value="1"/>
</dbReference>
<keyword id="KW-0175">Coiled coil</keyword>
<keyword id="KW-0964">Secreted</keyword>
<keyword id="KW-0843">Virulence</keyword>
<protein>
    <recommendedName>
        <fullName>Translocator protein BipD</fullName>
    </recommendedName>
</protein>
<evidence type="ECO:0000250" key="1"/>
<evidence type="ECO:0000255" key="2"/>
<evidence type="ECO:0000305" key="3"/>
<comment type="function">
    <text evidence="1">Required for invasion of epithelial cells, as well as for survival within host cells, escape from endocytic vesicles and subsequent actin-tail formation. Probably regulates the secretion of effectors BipB and BipC and their final integration into the target cell membrane (By similarity).</text>
</comment>
<comment type="subcellular location">
    <subcellularLocation>
        <location evidence="1">Secreted</location>
    </subcellularLocation>
    <text evidence="1">Secreted via the bsa type III secretion system. Localizes to the tip of the external secretion needle that is part of the secretion apparatus (By similarity).</text>
</comment>
<comment type="domain">
    <text evidence="1">The N-terminal domain is an intra-molecular chaperone that prevents premature oligomerization of the residues on the coiled-coil region that are involved in interactions with the needle and/or itself. The residues in the C-terminal domain probably form oligomeric structures at the tip of the needle that are responsible for the regulation of secretion of other effectors (By similarity).</text>
</comment>
<comment type="similarity">
    <text evidence="3">Belongs to the invasin protein D family.</text>
</comment>
<feature type="chain" id="PRO_0000344004" description="Translocator protein BipD">
    <location>
        <begin position="1"/>
        <end position="310"/>
    </location>
</feature>
<feature type="coiled-coil region" evidence="2">
    <location>
        <begin position="127"/>
        <end position="171"/>
    </location>
</feature>
<feature type="coiled-coil region" evidence="2">
    <location>
        <begin position="250"/>
        <end position="299"/>
    </location>
</feature>
<sequence length="310" mass="33975">MNMHVDMGRALTVRDWPALEALAKTMPADAGARAMTDDDLRAAGVDRRVPEQKLGAAIDEFASLRLPDRIDGRFVDGRRANLTVFDDARVAVRGHARAQRNLLERLETELLGGTLDTAGDEGGIQPDPILQGLVDVIGQGKSDIDAYATIVEGLTKYFQSVADVMSKLQDYISAKDDKNMKIDGGKIKALIQQVIDHLPTMQLPKGADIARWRKELGDAVSISDSGVVTINPDKLIKMRDSLPPDGTVWDTARYQAWNTAFSGQKDNIQNDVQTLVEKYSHQNSNFDNLVKVLSGAISTLTDTAKSYLQI</sequence>